<reference key="1">
    <citation type="journal article" date="2008" name="Genomics">
        <title>Characterization of ST-4821 complex, a unique Neisseria meningitidis clone.</title>
        <authorList>
            <person name="Peng J."/>
            <person name="Yang L."/>
            <person name="Yang F."/>
            <person name="Yang J."/>
            <person name="Yan Y."/>
            <person name="Nie H."/>
            <person name="Zhang X."/>
            <person name="Xiong Z."/>
            <person name="Jiang Y."/>
            <person name="Cheng F."/>
            <person name="Xu X."/>
            <person name="Chen S."/>
            <person name="Sun L."/>
            <person name="Li W."/>
            <person name="Shen Y."/>
            <person name="Shao Z."/>
            <person name="Liang X."/>
            <person name="Xu J."/>
            <person name="Jin Q."/>
        </authorList>
    </citation>
    <scope>NUCLEOTIDE SEQUENCE [LARGE SCALE GENOMIC DNA]</scope>
    <source>
        <strain>053442</strain>
    </source>
</reference>
<feature type="chain" id="PRO_1000094551" description="3-dehydroquinate synthase">
    <location>
        <begin position="1"/>
        <end position="359"/>
    </location>
</feature>
<feature type="binding site" evidence="1">
    <location>
        <begin position="71"/>
        <end position="76"/>
    </location>
    <ligand>
        <name>NAD(+)</name>
        <dbReference type="ChEBI" id="CHEBI:57540"/>
    </ligand>
</feature>
<feature type="binding site" evidence="1">
    <location>
        <begin position="105"/>
        <end position="109"/>
    </location>
    <ligand>
        <name>NAD(+)</name>
        <dbReference type="ChEBI" id="CHEBI:57540"/>
    </ligand>
</feature>
<feature type="binding site" evidence="1">
    <location>
        <begin position="129"/>
        <end position="130"/>
    </location>
    <ligand>
        <name>NAD(+)</name>
        <dbReference type="ChEBI" id="CHEBI:57540"/>
    </ligand>
</feature>
<feature type="binding site" evidence="1">
    <location>
        <position position="142"/>
    </location>
    <ligand>
        <name>NAD(+)</name>
        <dbReference type="ChEBI" id="CHEBI:57540"/>
    </ligand>
</feature>
<feature type="binding site" evidence="1">
    <location>
        <position position="151"/>
    </location>
    <ligand>
        <name>NAD(+)</name>
        <dbReference type="ChEBI" id="CHEBI:57540"/>
    </ligand>
</feature>
<feature type="binding site" evidence="1">
    <location>
        <begin position="169"/>
        <end position="172"/>
    </location>
    <ligand>
        <name>NAD(+)</name>
        <dbReference type="ChEBI" id="CHEBI:57540"/>
    </ligand>
</feature>
<feature type="binding site" evidence="1">
    <location>
        <position position="184"/>
    </location>
    <ligand>
        <name>Zn(2+)</name>
        <dbReference type="ChEBI" id="CHEBI:29105"/>
    </ligand>
</feature>
<feature type="binding site" evidence="1">
    <location>
        <position position="247"/>
    </location>
    <ligand>
        <name>Zn(2+)</name>
        <dbReference type="ChEBI" id="CHEBI:29105"/>
    </ligand>
</feature>
<feature type="binding site" evidence="1">
    <location>
        <position position="264"/>
    </location>
    <ligand>
        <name>Zn(2+)</name>
        <dbReference type="ChEBI" id="CHEBI:29105"/>
    </ligand>
</feature>
<evidence type="ECO:0000255" key="1">
    <source>
        <dbReference type="HAMAP-Rule" id="MF_00110"/>
    </source>
</evidence>
<proteinExistence type="inferred from homology"/>
<dbReference type="EC" id="4.2.3.4" evidence="1"/>
<dbReference type="EMBL" id="CP000381">
    <property type="protein sequence ID" value="ABX72619.1"/>
    <property type="molecule type" value="Genomic_DNA"/>
</dbReference>
<dbReference type="RefSeq" id="WP_012221312.1">
    <property type="nucleotide sequence ID" value="NC_010120.1"/>
</dbReference>
<dbReference type="SMR" id="A9M1U4"/>
<dbReference type="KEGG" id="nmn:NMCC_0414"/>
<dbReference type="HOGENOM" id="CLU_001201_0_2_4"/>
<dbReference type="UniPathway" id="UPA00053">
    <property type="reaction ID" value="UER00085"/>
</dbReference>
<dbReference type="Proteomes" id="UP000001177">
    <property type="component" value="Chromosome"/>
</dbReference>
<dbReference type="GO" id="GO:0005737">
    <property type="term" value="C:cytoplasm"/>
    <property type="evidence" value="ECO:0007669"/>
    <property type="project" value="UniProtKB-SubCell"/>
</dbReference>
<dbReference type="GO" id="GO:0003856">
    <property type="term" value="F:3-dehydroquinate synthase activity"/>
    <property type="evidence" value="ECO:0007669"/>
    <property type="project" value="UniProtKB-UniRule"/>
</dbReference>
<dbReference type="GO" id="GO:0046872">
    <property type="term" value="F:metal ion binding"/>
    <property type="evidence" value="ECO:0007669"/>
    <property type="project" value="UniProtKB-KW"/>
</dbReference>
<dbReference type="GO" id="GO:0000166">
    <property type="term" value="F:nucleotide binding"/>
    <property type="evidence" value="ECO:0007669"/>
    <property type="project" value="UniProtKB-KW"/>
</dbReference>
<dbReference type="GO" id="GO:0008652">
    <property type="term" value="P:amino acid biosynthetic process"/>
    <property type="evidence" value="ECO:0007669"/>
    <property type="project" value="UniProtKB-KW"/>
</dbReference>
<dbReference type="GO" id="GO:0009073">
    <property type="term" value="P:aromatic amino acid family biosynthetic process"/>
    <property type="evidence" value="ECO:0007669"/>
    <property type="project" value="UniProtKB-KW"/>
</dbReference>
<dbReference type="GO" id="GO:0009423">
    <property type="term" value="P:chorismate biosynthetic process"/>
    <property type="evidence" value="ECO:0007669"/>
    <property type="project" value="UniProtKB-UniRule"/>
</dbReference>
<dbReference type="CDD" id="cd08195">
    <property type="entry name" value="DHQS"/>
    <property type="match status" value="1"/>
</dbReference>
<dbReference type="FunFam" id="1.20.1090.10:FF:000002">
    <property type="entry name" value="3-dehydroquinate synthase"/>
    <property type="match status" value="1"/>
</dbReference>
<dbReference type="FunFam" id="3.40.50.1970:FF:000001">
    <property type="entry name" value="3-dehydroquinate synthase"/>
    <property type="match status" value="1"/>
</dbReference>
<dbReference type="Gene3D" id="3.40.50.1970">
    <property type="match status" value="1"/>
</dbReference>
<dbReference type="Gene3D" id="1.20.1090.10">
    <property type="entry name" value="Dehydroquinate synthase-like - alpha domain"/>
    <property type="match status" value="1"/>
</dbReference>
<dbReference type="HAMAP" id="MF_00110">
    <property type="entry name" value="DHQ_synthase"/>
    <property type="match status" value="1"/>
</dbReference>
<dbReference type="InterPro" id="IPR050071">
    <property type="entry name" value="Dehydroquinate_synthase"/>
</dbReference>
<dbReference type="InterPro" id="IPR016037">
    <property type="entry name" value="DHQ_synth_AroB"/>
</dbReference>
<dbReference type="InterPro" id="IPR030963">
    <property type="entry name" value="DHQ_synth_fam"/>
</dbReference>
<dbReference type="InterPro" id="IPR030960">
    <property type="entry name" value="DHQS/DOIS_N"/>
</dbReference>
<dbReference type="InterPro" id="IPR056179">
    <property type="entry name" value="DHQS_C"/>
</dbReference>
<dbReference type="NCBIfam" id="TIGR01357">
    <property type="entry name" value="aroB"/>
    <property type="match status" value="1"/>
</dbReference>
<dbReference type="PANTHER" id="PTHR43622">
    <property type="entry name" value="3-DEHYDROQUINATE SYNTHASE"/>
    <property type="match status" value="1"/>
</dbReference>
<dbReference type="PANTHER" id="PTHR43622:SF7">
    <property type="entry name" value="3-DEHYDROQUINATE SYNTHASE, CHLOROPLASTIC"/>
    <property type="match status" value="1"/>
</dbReference>
<dbReference type="Pfam" id="PF01761">
    <property type="entry name" value="DHQ_synthase"/>
    <property type="match status" value="1"/>
</dbReference>
<dbReference type="Pfam" id="PF24621">
    <property type="entry name" value="DHQS_C"/>
    <property type="match status" value="1"/>
</dbReference>
<dbReference type="PIRSF" id="PIRSF001455">
    <property type="entry name" value="DHQ_synth"/>
    <property type="match status" value="1"/>
</dbReference>
<dbReference type="SUPFAM" id="SSF56796">
    <property type="entry name" value="Dehydroquinate synthase-like"/>
    <property type="match status" value="1"/>
</dbReference>
<keyword id="KW-0028">Amino-acid biosynthesis</keyword>
<keyword id="KW-0057">Aromatic amino acid biosynthesis</keyword>
<keyword id="KW-0170">Cobalt</keyword>
<keyword id="KW-0963">Cytoplasm</keyword>
<keyword id="KW-0456">Lyase</keyword>
<keyword id="KW-0479">Metal-binding</keyword>
<keyword id="KW-0520">NAD</keyword>
<keyword id="KW-0547">Nucleotide-binding</keyword>
<keyword id="KW-0862">Zinc</keyword>
<accession>A9M1U4</accession>
<comment type="function">
    <text evidence="1">Catalyzes the conversion of 3-deoxy-D-arabino-heptulosonate 7-phosphate (DAHP) to dehydroquinate (DHQ).</text>
</comment>
<comment type="catalytic activity">
    <reaction evidence="1">
        <text>7-phospho-2-dehydro-3-deoxy-D-arabino-heptonate = 3-dehydroquinate + phosphate</text>
        <dbReference type="Rhea" id="RHEA:21968"/>
        <dbReference type="ChEBI" id="CHEBI:32364"/>
        <dbReference type="ChEBI" id="CHEBI:43474"/>
        <dbReference type="ChEBI" id="CHEBI:58394"/>
        <dbReference type="EC" id="4.2.3.4"/>
    </reaction>
</comment>
<comment type="cofactor">
    <cofactor evidence="1">
        <name>Co(2+)</name>
        <dbReference type="ChEBI" id="CHEBI:48828"/>
    </cofactor>
    <cofactor evidence="1">
        <name>Zn(2+)</name>
        <dbReference type="ChEBI" id="CHEBI:29105"/>
    </cofactor>
    <text evidence="1">Binds 1 divalent metal cation per subunit. Can use either Co(2+) or Zn(2+).</text>
</comment>
<comment type="cofactor">
    <cofactor evidence="1">
        <name>NAD(+)</name>
        <dbReference type="ChEBI" id="CHEBI:57540"/>
    </cofactor>
</comment>
<comment type="pathway">
    <text evidence="1">Metabolic intermediate biosynthesis; chorismate biosynthesis; chorismate from D-erythrose 4-phosphate and phosphoenolpyruvate: step 2/7.</text>
</comment>
<comment type="subcellular location">
    <subcellularLocation>
        <location evidence="1">Cytoplasm</location>
    </subcellularLocation>
</comment>
<comment type="similarity">
    <text evidence="1">Belongs to the sugar phosphate cyclases superfamily. Dehydroquinate synthase family.</text>
</comment>
<protein>
    <recommendedName>
        <fullName evidence="1">3-dehydroquinate synthase</fullName>
        <shortName evidence="1">DHQS</shortName>
        <ecNumber evidence="1">4.2.3.4</ecNumber>
    </recommendedName>
</protein>
<organism>
    <name type="scientific">Neisseria meningitidis serogroup C (strain 053442)</name>
    <dbReference type="NCBI Taxonomy" id="374833"/>
    <lineage>
        <taxon>Bacteria</taxon>
        <taxon>Pseudomonadati</taxon>
        <taxon>Pseudomonadota</taxon>
        <taxon>Betaproteobacteria</taxon>
        <taxon>Neisseriales</taxon>
        <taxon>Neisseriaceae</taxon>
        <taxon>Neisseria</taxon>
    </lineage>
</organism>
<name>AROB_NEIM0</name>
<gene>
    <name evidence="1" type="primary">aroB</name>
    <name type="ordered locus">NMCC_0414</name>
</gene>
<sequence>MKTLTVHTPSHSYPIFIGNGLLPQAGSLLKPHLGKRAAIITNETVAPLYLGTLQTALDAAGVSHFSIILPDGEAHKNWQTLNLIFDGLMQNRAERKTTLIALGGGVIGDMTGFAAATYQRGAPFVQIPTTLLSQVDSSVGGKTAINHPLGKNMIGAFYQPQAVLADLDTLHTLPARELSAGMAEVIKYGTLGDISFFEWLEQHMPELMALERAPLIQAVYRCCQMKADIVAQDETEQGIRAWLNLGHTFGHAIETEMGYGTWLHGEAVAAGCVLAARLSEQLGKISAADTARLAALLEAAGLPSAPPVFAFEKWLEHMSHDKKVSSGVMRFIGLNRLGEAVITEITDTDILRRTLQPYL</sequence>